<protein>
    <recommendedName>
        <fullName evidence="1">Replication restart protein PriB</fullName>
    </recommendedName>
</protein>
<gene>
    <name evidence="1" type="primary">priB</name>
    <name type="ordered locus">YPO3538</name>
    <name type="ordered locus">y0645.1</name>
    <name type="ordered locus">YP_0543</name>
</gene>
<name>PRIB_YERPE</name>
<accession>Q8ZB82</accession>
<accession>Q0WBB1</accession>
<feature type="chain" id="PRO_0000199068" description="Replication restart protein PriB">
    <location>
        <begin position="1"/>
        <end position="106"/>
    </location>
</feature>
<feature type="domain" description="SSB" evidence="1">
    <location>
        <begin position="4"/>
        <end position="103"/>
    </location>
</feature>
<dbReference type="EMBL" id="AL590842">
    <property type="protein sequence ID" value="CAL22126.1"/>
    <property type="molecule type" value="Genomic_DNA"/>
</dbReference>
<dbReference type="EMBL" id="AE009952">
    <property type="status" value="NOT_ANNOTATED_CDS"/>
    <property type="molecule type" value="Genomic_DNA"/>
</dbReference>
<dbReference type="EMBL" id="AE017042">
    <property type="protein sequence ID" value="AAS60813.1"/>
    <property type="molecule type" value="Genomic_DNA"/>
</dbReference>
<dbReference type="PIR" id="AC0430">
    <property type="entry name" value="AC0430"/>
</dbReference>
<dbReference type="RefSeq" id="WP_002210154.1">
    <property type="nucleotide sequence ID" value="NZ_WUCM01000155.1"/>
</dbReference>
<dbReference type="RefSeq" id="YP_002348427.1">
    <property type="nucleotide sequence ID" value="NC_003143.1"/>
</dbReference>
<dbReference type="SMR" id="Q8ZB82"/>
<dbReference type="STRING" id="214092.YPO3538"/>
<dbReference type="PaxDb" id="214092-YPO3538"/>
<dbReference type="EnsemblBacteria" id="AAS60813">
    <property type="protein sequence ID" value="AAS60813"/>
    <property type="gene ID" value="YP_0543"/>
</dbReference>
<dbReference type="GeneID" id="96663941"/>
<dbReference type="KEGG" id="ype:YPO3538"/>
<dbReference type="KEGG" id="ypm:YP_0543"/>
<dbReference type="PATRIC" id="fig|214092.21.peg.4033"/>
<dbReference type="eggNOG" id="COG2965">
    <property type="taxonomic scope" value="Bacteria"/>
</dbReference>
<dbReference type="HOGENOM" id="CLU_166075_0_0_6"/>
<dbReference type="OMA" id="CQMPVII"/>
<dbReference type="OrthoDB" id="9180733at2"/>
<dbReference type="Proteomes" id="UP000000815">
    <property type="component" value="Chromosome"/>
</dbReference>
<dbReference type="Proteomes" id="UP000001019">
    <property type="component" value="Chromosome"/>
</dbReference>
<dbReference type="Proteomes" id="UP000002490">
    <property type="component" value="Chromosome"/>
</dbReference>
<dbReference type="GO" id="GO:0009295">
    <property type="term" value="C:nucleoid"/>
    <property type="evidence" value="ECO:0000318"/>
    <property type="project" value="GO_Central"/>
</dbReference>
<dbReference type="GO" id="GO:1990077">
    <property type="term" value="C:primosome complex"/>
    <property type="evidence" value="ECO:0007669"/>
    <property type="project" value="UniProtKB-KW"/>
</dbReference>
<dbReference type="GO" id="GO:0008047">
    <property type="term" value="F:enzyme activator activity"/>
    <property type="evidence" value="ECO:0000318"/>
    <property type="project" value="GO_Central"/>
</dbReference>
<dbReference type="GO" id="GO:0003697">
    <property type="term" value="F:single-stranded DNA binding"/>
    <property type="evidence" value="ECO:0000318"/>
    <property type="project" value="GO_Central"/>
</dbReference>
<dbReference type="GO" id="GO:0006260">
    <property type="term" value="P:DNA replication"/>
    <property type="evidence" value="ECO:0000318"/>
    <property type="project" value="GO_Central"/>
</dbReference>
<dbReference type="GO" id="GO:0006269">
    <property type="term" value="P:DNA replication, synthesis of primer"/>
    <property type="evidence" value="ECO:0007669"/>
    <property type="project" value="UniProtKB-KW"/>
</dbReference>
<dbReference type="Gene3D" id="2.40.50.140">
    <property type="entry name" value="Nucleic acid-binding proteins"/>
    <property type="match status" value="1"/>
</dbReference>
<dbReference type="HAMAP" id="MF_00720">
    <property type="entry name" value="PriB"/>
    <property type="match status" value="1"/>
</dbReference>
<dbReference type="InterPro" id="IPR012340">
    <property type="entry name" value="NA-bd_OB-fold"/>
</dbReference>
<dbReference type="InterPro" id="IPR000424">
    <property type="entry name" value="Primosome_PriB/ssb"/>
</dbReference>
<dbReference type="InterPro" id="IPR023646">
    <property type="entry name" value="Prisomal_replication_PriB"/>
</dbReference>
<dbReference type="NCBIfam" id="TIGR04418">
    <property type="entry name" value="PriB_gamma"/>
    <property type="match status" value="1"/>
</dbReference>
<dbReference type="Pfam" id="PF22657">
    <property type="entry name" value="SSB_1"/>
    <property type="match status" value="1"/>
</dbReference>
<dbReference type="PIRSF" id="PIRSF003135">
    <property type="entry name" value="Primosomal_n"/>
    <property type="match status" value="1"/>
</dbReference>
<dbReference type="SUPFAM" id="SSF50249">
    <property type="entry name" value="Nucleic acid-binding proteins"/>
    <property type="match status" value="1"/>
</dbReference>
<dbReference type="PROSITE" id="PS50935">
    <property type="entry name" value="SSB"/>
    <property type="match status" value="1"/>
</dbReference>
<reference key="1">
    <citation type="journal article" date="2001" name="Nature">
        <title>Genome sequence of Yersinia pestis, the causative agent of plague.</title>
        <authorList>
            <person name="Parkhill J."/>
            <person name="Wren B.W."/>
            <person name="Thomson N.R."/>
            <person name="Titball R.W."/>
            <person name="Holden M.T.G."/>
            <person name="Prentice M.B."/>
            <person name="Sebaihia M."/>
            <person name="James K.D."/>
            <person name="Churcher C.M."/>
            <person name="Mungall K.L."/>
            <person name="Baker S."/>
            <person name="Basham D."/>
            <person name="Bentley S.D."/>
            <person name="Brooks K."/>
            <person name="Cerdeno-Tarraga A.-M."/>
            <person name="Chillingworth T."/>
            <person name="Cronin A."/>
            <person name="Davies R.M."/>
            <person name="Davis P."/>
            <person name="Dougan G."/>
            <person name="Feltwell T."/>
            <person name="Hamlin N."/>
            <person name="Holroyd S."/>
            <person name="Jagels K."/>
            <person name="Karlyshev A.V."/>
            <person name="Leather S."/>
            <person name="Moule S."/>
            <person name="Oyston P.C.F."/>
            <person name="Quail M.A."/>
            <person name="Rutherford K.M."/>
            <person name="Simmonds M."/>
            <person name="Skelton J."/>
            <person name="Stevens K."/>
            <person name="Whitehead S."/>
            <person name="Barrell B.G."/>
        </authorList>
    </citation>
    <scope>NUCLEOTIDE SEQUENCE [LARGE SCALE GENOMIC DNA]</scope>
    <source>
        <strain>CO-92 / Biovar Orientalis</strain>
    </source>
</reference>
<reference key="2">
    <citation type="journal article" date="2002" name="J. Bacteriol.">
        <title>Genome sequence of Yersinia pestis KIM.</title>
        <authorList>
            <person name="Deng W."/>
            <person name="Burland V."/>
            <person name="Plunkett G. III"/>
            <person name="Boutin A."/>
            <person name="Mayhew G.F."/>
            <person name="Liss P."/>
            <person name="Perna N.T."/>
            <person name="Rose D.J."/>
            <person name="Mau B."/>
            <person name="Zhou S."/>
            <person name="Schwartz D.C."/>
            <person name="Fetherston J.D."/>
            <person name="Lindler L.E."/>
            <person name="Brubaker R.R."/>
            <person name="Plano G.V."/>
            <person name="Straley S.C."/>
            <person name="McDonough K.A."/>
            <person name="Nilles M.L."/>
            <person name="Matson J.S."/>
            <person name="Blattner F.R."/>
            <person name="Perry R.D."/>
        </authorList>
    </citation>
    <scope>NUCLEOTIDE SEQUENCE [LARGE SCALE GENOMIC DNA]</scope>
    <source>
        <strain>KIM10+ / Biovar Mediaevalis</strain>
    </source>
</reference>
<reference key="3">
    <citation type="journal article" date="2004" name="DNA Res.">
        <title>Complete genome sequence of Yersinia pestis strain 91001, an isolate avirulent to humans.</title>
        <authorList>
            <person name="Song Y."/>
            <person name="Tong Z."/>
            <person name="Wang J."/>
            <person name="Wang L."/>
            <person name="Guo Z."/>
            <person name="Han Y."/>
            <person name="Zhang J."/>
            <person name="Pei D."/>
            <person name="Zhou D."/>
            <person name="Qin H."/>
            <person name="Pang X."/>
            <person name="Han Y."/>
            <person name="Zhai J."/>
            <person name="Li M."/>
            <person name="Cui B."/>
            <person name="Qi Z."/>
            <person name="Jin L."/>
            <person name="Dai R."/>
            <person name="Chen F."/>
            <person name="Li S."/>
            <person name="Ye C."/>
            <person name="Du Z."/>
            <person name="Lin W."/>
            <person name="Wang J."/>
            <person name="Yu J."/>
            <person name="Yang H."/>
            <person name="Wang J."/>
            <person name="Huang P."/>
            <person name="Yang R."/>
        </authorList>
    </citation>
    <scope>NUCLEOTIDE SEQUENCE [LARGE SCALE GENOMIC DNA]</scope>
    <source>
        <strain>91001 / Biovar Mediaevalis</strain>
    </source>
</reference>
<sequence>MVTTNRLVLSGTVCKTPVRKVSPSGIPHCQFVLEHRSTQQEAGFSRQTWCRMPIVVSGQQSQALTHSITVGSQLTVEGFISCHQGRNGLNKLVLHAEQIEFIDSGD</sequence>
<comment type="function">
    <text evidence="1">Involved in the restart of stalled replication forks, which reloads the replicative helicase on sites other than the origin of replication; the PriA-PriB pathway is the major replication restart pathway. During primosome assembly it facilitates complex formation between PriA and DnaT on DNA; stabilizes PriA on DNA. Stimulates the DNA unwinding activity of PriA helicase.</text>
</comment>
<comment type="subunit">
    <text evidence="1">Homodimer. Interacts with PriA and DnaT. Component of the replication restart primosome. Primosome assembly occurs via a 'hand-off' mechanism. PriA binds to replication forks, subsequently PriB then DnaT bind; DnaT then displaces ssDNA to generate the helicase loading substrate.</text>
</comment>
<comment type="similarity">
    <text evidence="1">Belongs to the PriB family.</text>
</comment>
<organism>
    <name type="scientific">Yersinia pestis</name>
    <dbReference type="NCBI Taxonomy" id="632"/>
    <lineage>
        <taxon>Bacteria</taxon>
        <taxon>Pseudomonadati</taxon>
        <taxon>Pseudomonadota</taxon>
        <taxon>Gammaproteobacteria</taxon>
        <taxon>Enterobacterales</taxon>
        <taxon>Yersiniaceae</taxon>
        <taxon>Yersinia</taxon>
    </lineage>
</organism>
<proteinExistence type="inferred from homology"/>
<evidence type="ECO:0000255" key="1">
    <source>
        <dbReference type="HAMAP-Rule" id="MF_00720"/>
    </source>
</evidence>
<keyword id="KW-0235">DNA replication</keyword>
<keyword id="KW-0238">DNA-binding</keyword>
<keyword id="KW-0639">Primosome</keyword>
<keyword id="KW-1185">Reference proteome</keyword>